<protein>
    <recommendedName>
        <fullName evidence="1">DNA repair protein RadA</fullName>
        <ecNumber evidence="1">3.6.4.-</ecNumber>
    </recommendedName>
    <alternativeName>
        <fullName evidence="1">Branch migration protein RadA</fullName>
    </alternativeName>
</protein>
<reference key="1">
    <citation type="journal article" date="2001" name="Proc. Natl. Acad. Sci. U.S.A.">
        <title>Complete genome sequence of an M1 strain of Streptococcus pyogenes.</title>
        <authorList>
            <person name="Ferretti J.J."/>
            <person name="McShan W.M."/>
            <person name="Ajdic D.J."/>
            <person name="Savic D.J."/>
            <person name="Savic G."/>
            <person name="Lyon K."/>
            <person name="Primeaux C."/>
            <person name="Sezate S."/>
            <person name="Suvorov A.N."/>
            <person name="Kenton S."/>
            <person name="Lai H.S."/>
            <person name="Lin S.P."/>
            <person name="Qian Y."/>
            <person name="Jia H.G."/>
            <person name="Najar F.Z."/>
            <person name="Ren Q."/>
            <person name="Zhu H."/>
            <person name="Song L."/>
            <person name="White J."/>
            <person name="Yuan X."/>
            <person name="Clifton S.W."/>
            <person name="Roe B.A."/>
            <person name="McLaughlin R.E."/>
        </authorList>
    </citation>
    <scope>NUCLEOTIDE SEQUENCE [LARGE SCALE GENOMIC DNA]</scope>
    <source>
        <strain>ATCC 700294 / SF370 / Serotype M1</strain>
    </source>
</reference>
<reference key="2">
    <citation type="journal article" date="2005" name="J. Infect. Dis.">
        <title>Evolutionary origin and emergence of a highly successful clone of serotype M1 group A Streptococcus involved multiple horizontal gene transfer events.</title>
        <authorList>
            <person name="Sumby P."/>
            <person name="Porcella S.F."/>
            <person name="Madrigal A.G."/>
            <person name="Barbian K.D."/>
            <person name="Virtaneva K."/>
            <person name="Ricklefs S.M."/>
            <person name="Sturdevant D.E."/>
            <person name="Graham M.R."/>
            <person name="Vuopio-Varkila J."/>
            <person name="Hoe N.P."/>
            <person name="Musser J.M."/>
        </authorList>
    </citation>
    <scope>NUCLEOTIDE SEQUENCE [LARGE SCALE GENOMIC DNA]</scope>
    <source>
        <strain>ATCC BAA-947 / MGAS5005 / Serotype M1</strain>
    </source>
</reference>
<sequence length="453" mass="49373">MAKKKATFICQECGYQSPKYLGRCPNCSAWSSFVEEVEVKEVKNARVSLAGEKSRPVKLKDVDNISYHRTQTDMSEFNRVLGGGVVPGSLILIGGDPGIGKSTLLLQVSTQLANKGTVLYVSGEESAEQIKLRSERLGDIDNEFYLYAETNMQAIRTEIENIKPDFLIIDSIQTIMSPDITGVQGSVSQVREVTAELMQLAKTNNIATFIVGHVTKEGTLAGPRMLEHMVDTVLYFEGERHHTFRILRAVKNRFGSTNEIGIFEMQSGGLVEVLNPSQVFLEERLDGATGSAVVVTMEGSRPILAEVQSLVTPTVFGNARRTTTGLDFNRVSLIMAVLEKRCGLLLQNQDAYLKSAGGVKLDEPAIDLAVAVAIASSYKEKPTSPQEAFLGEIGLTGEIRRVTRIEQRINEAAKLGFTKVYAPKNALQGIDIPQGIEVVGVTTVGQVLNAVFS</sequence>
<evidence type="ECO:0000255" key="1">
    <source>
        <dbReference type="HAMAP-Rule" id="MF_01498"/>
    </source>
</evidence>
<organism>
    <name type="scientific">Streptococcus pyogenes serotype M1</name>
    <dbReference type="NCBI Taxonomy" id="301447"/>
    <lineage>
        <taxon>Bacteria</taxon>
        <taxon>Bacillati</taxon>
        <taxon>Bacillota</taxon>
        <taxon>Bacilli</taxon>
        <taxon>Lactobacillales</taxon>
        <taxon>Streptococcaceae</taxon>
        <taxon>Streptococcus</taxon>
    </lineage>
</organism>
<comment type="function">
    <text evidence="1">DNA-dependent ATPase involved in processing of recombination intermediates, plays a role in repairing DNA breaks. Stimulates the branch migration of RecA-mediated strand transfer reactions, allowing the 3' invading strand to extend heteroduplex DNA faster. Binds ssDNA in the presence of ADP but not other nucleotides, has ATPase activity that is stimulated by ssDNA and various branched DNA structures, but inhibited by SSB. Does not have RecA's homology-searching function.</text>
</comment>
<comment type="domain">
    <text evidence="1">Has a putative N-terminal zinc-finger, a middle region with homology to RecA with ATPase motifs including the RadA KNRFG motif, while the C-terminus is homologous to Lon protease.</text>
</comment>
<comment type="similarity">
    <text evidence="1">Belongs to the RecA family. RadA subfamily.</text>
</comment>
<accession>Q9A1K1</accession>
<accession>Q490Z9</accession>
<dbReference type="EC" id="3.6.4.-" evidence="1"/>
<dbReference type="EMBL" id="AE004092">
    <property type="protein sequence ID" value="AAK33316.1"/>
    <property type="molecule type" value="Genomic_DNA"/>
</dbReference>
<dbReference type="EMBL" id="CP000017">
    <property type="protein sequence ID" value="AAZ50819.1"/>
    <property type="molecule type" value="Genomic_DNA"/>
</dbReference>
<dbReference type="RefSeq" id="NP_268595.1">
    <property type="nucleotide sequence ID" value="NC_002737.2"/>
</dbReference>
<dbReference type="SMR" id="Q9A1K1"/>
<dbReference type="MEROPS" id="S16.A04"/>
<dbReference type="PaxDb" id="1314-HKU360_00241"/>
<dbReference type="KEGG" id="spy:SPy_0236"/>
<dbReference type="KEGG" id="spz:M5005_Spy0200"/>
<dbReference type="PATRIC" id="fig|160490.10.peg.208"/>
<dbReference type="HOGENOM" id="CLU_018264_0_1_9"/>
<dbReference type="OMA" id="CPECQAW"/>
<dbReference type="Proteomes" id="UP000000750">
    <property type="component" value="Chromosome"/>
</dbReference>
<dbReference type="GO" id="GO:0005829">
    <property type="term" value="C:cytosol"/>
    <property type="evidence" value="ECO:0007669"/>
    <property type="project" value="TreeGrafter"/>
</dbReference>
<dbReference type="GO" id="GO:0005524">
    <property type="term" value="F:ATP binding"/>
    <property type="evidence" value="ECO:0007669"/>
    <property type="project" value="UniProtKB-UniRule"/>
</dbReference>
<dbReference type="GO" id="GO:0016887">
    <property type="term" value="F:ATP hydrolysis activity"/>
    <property type="evidence" value="ECO:0007669"/>
    <property type="project" value="InterPro"/>
</dbReference>
<dbReference type="GO" id="GO:0140664">
    <property type="term" value="F:ATP-dependent DNA damage sensor activity"/>
    <property type="evidence" value="ECO:0007669"/>
    <property type="project" value="InterPro"/>
</dbReference>
<dbReference type="GO" id="GO:0003684">
    <property type="term" value="F:damaged DNA binding"/>
    <property type="evidence" value="ECO:0007669"/>
    <property type="project" value="InterPro"/>
</dbReference>
<dbReference type="GO" id="GO:0008270">
    <property type="term" value="F:zinc ion binding"/>
    <property type="evidence" value="ECO:0007669"/>
    <property type="project" value="UniProtKB-KW"/>
</dbReference>
<dbReference type="GO" id="GO:0000725">
    <property type="term" value="P:recombinational repair"/>
    <property type="evidence" value="ECO:0007669"/>
    <property type="project" value="UniProtKB-UniRule"/>
</dbReference>
<dbReference type="CDD" id="cd01121">
    <property type="entry name" value="RadA_SMS_N"/>
    <property type="match status" value="1"/>
</dbReference>
<dbReference type="FunFam" id="3.30.230.10:FF:000031">
    <property type="entry name" value="DNA repair protein RadA"/>
    <property type="match status" value="1"/>
</dbReference>
<dbReference type="FunFam" id="3.40.50.300:FF:000050">
    <property type="entry name" value="DNA repair protein RadA"/>
    <property type="match status" value="1"/>
</dbReference>
<dbReference type="Gene3D" id="3.30.230.10">
    <property type="match status" value="1"/>
</dbReference>
<dbReference type="Gene3D" id="3.40.50.300">
    <property type="entry name" value="P-loop containing nucleotide triphosphate hydrolases"/>
    <property type="match status" value="1"/>
</dbReference>
<dbReference type="HAMAP" id="MF_01498">
    <property type="entry name" value="RadA_bact"/>
    <property type="match status" value="1"/>
</dbReference>
<dbReference type="InterPro" id="IPR003593">
    <property type="entry name" value="AAA+_ATPase"/>
</dbReference>
<dbReference type="InterPro" id="IPR004504">
    <property type="entry name" value="DNA_repair_RadA"/>
</dbReference>
<dbReference type="InterPro" id="IPR027417">
    <property type="entry name" value="P-loop_NTPase"/>
</dbReference>
<dbReference type="InterPro" id="IPR020588">
    <property type="entry name" value="RecA_ATP-bd"/>
</dbReference>
<dbReference type="InterPro" id="IPR020568">
    <property type="entry name" value="Ribosomal_Su5_D2-typ_SF"/>
</dbReference>
<dbReference type="InterPro" id="IPR014721">
    <property type="entry name" value="Ribsml_uS5_D2-typ_fold_subgr"/>
</dbReference>
<dbReference type="InterPro" id="IPR041166">
    <property type="entry name" value="Rubredoxin_2"/>
</dbReference>
<dbReference type="NCBIfam" id="TIGR00416">
    <property type="entry name" value="sms"/>
    <property type="match status" value="1"/>
</dbReference>
<dbReference type="PANTHER" id="PTHR32472">
    <property type="entry name" value="DNA REPAIR PROTEIN RADA"/>
    <property type="match status" value="1"/>
</dbReference>
<dbReference type="PANTHER" id="PTHR32472:SF10">
    <property type="entry name" value="DNA REPAIR PROTEIN RADA-LIKE PROTEIN"/>
    <property type="match status" value="1"/>
</dbReference>
<dbReference type="Pfam" id="PF13481">
    <property type="entry name" value="AAA_25"/>
    <property type="match status" value="1"/>
</dbReference>
<dbReference type="Pfam" id="PF13541">
    <property type="entry name" value="ChlI"/>
    <property type="match status" value="1"/>
</dbReference>
<dbReference type="Pfam" id="PF18073">
    <property type="entry name" value="Zn_ribbon_LapB"/>
    <property type="match status" value="1"/>
</dbReference>
<dbReference type="PRINTS" id="PR01874">
    <property type="entry name" value="DNAREPAIRADA"/>
</dbReference>
<dbReference type="SMART" id="SM00382">
    <property type="entry name" value="AAA"/>
    <property type="match status" value="1"/>
</dbReference>
<dbReference type="SUPFAM" id="SSF52540">
    <property type="entry name" value="P-loop containing nucleoside triphosphate hydrolases"/>
    <property type="match status" value="1"/>
</dbReference>
<dbReference type="SUPFAM" id="SSF54211">
    <property type="entry name" value="Ribosomal protein S5 domain 2-like"/>
    <property type="match status" value="1"/>
</dbReference>
<dbReference type="PROSITE" id="PS50162">
    <property type="entry name" value="RECA_2"/>
    <property type="match status" value="1"/>
</dbReference>
<gene>
    <name evidence="1" type="primary">radA</name>
    <name type="synonym">sms</name>
    <name type="ordered locus">SPy_0236</name>
    <name type="ordered locus">M5005_Spy0200</name>
</gene>
<keyword id="KW-0067">ATP-binding</keyword>
<keyword id="KW-0227">DNA damage</keyword>
<keyword id="KW-0234">DNA repair</keyword>
<keyword id="KW-0238">DNA-binding</keyword>
<keyword id="KW-0378">Hydrolase</keyword>
<keyword id="KW-0479">Metal-binding</keyword>
<keyword id="KW-0547">Nucleotide-binding</keyword>
<keyword id="KW-1185">Reference proteome</keyword>
<keyword id="KW-0346">Stress response</keyword>
<keyword id="KW-0862">Zinc</keyword>
<keyword id="KW-0863">Zinc-finger</keyword>
<proteinExistence type="inferred from homology"/>
<feature type="chain" id="PRO_0000187938" description="DNA repair protein RadA">
    <location>
        <begin position="1"/>
        <end position="453"/>
    </location>
</feature>
<feature type="zinc finger region" description="C4-type" evidence="1">
    <location>
        <begin position="10"/>
        <end position="27"/>
    </location>
</feature>
<feature type="region of interest" description="Lon-protease-like" evidence="1">
    <location>
        <begin position="350"/>
        <end position="453"/>
    </location>
</feature>
<feature type="short sequence motif" description="RadA KNRFG motif" evidence="1">
    <location>
        <begin position="251"/>
        <end position="255"/>
    </location>
</feature>
<feature type="binding site" evidence="1">
    <location>
        <begin position="95"/>
        <end position="102"/>
    </location>
    <ligand>
        <name>ATP</name>
        <dbReference type="ChEBI" id="CHEBI:30616"/>
    </ligand>
</feature>
<name>RADA_STRP1</name>